<keyword id="KW-0687">Ribonucleoprotein</keyword>
<keyword id="KW-0689">Ribosomal protein</keyword>
<keyword id="KW-0694">RNA-binding</keyword>
<keyword id="KW-0699">rRNA-binding</keyword>
<dbReference type="EMBL" id="AM902716">
    <property type="protein sequence ID" value="CAP45283.1"/>
    <property type="molecule type" value="Genomic_DNA"/>
</dbReference>
<dbReference type="SMR" id="A9IHS7"/>
<dbReference type="STRING" id="94624.Bpet4931"/>
<dbReference type="KEGG" id="bpt:Bpet4931"/>
<dbReference type="eggNOG" id="COG0200">
    <property type="taxonomic scope" value="Bacteria"/>
</dbReference>
<dbReference type="Proteomes" id="UP000001225">
    <property type="component" value="Chromosome"/>
</dbReference>
<dbReference type="GO" id="GO:0022625">
    <property type="term" value="C:cytosolic large ribosomal subunit"/>
    <property type="evidence" value="ECO:0007669"/>
    <property type="project" value="TreeGrafter"/>
</dbReference>
<dbReference type="GO" id="GO:0019843">
    <property type="term" value="F:rRNA binding"/>
    <property type="evidence" value="ECO:0007669"/>
    <property type="project" value="UniProtKB-UniRule"/>
</dbReference>
<dbReference type="GO" id="GO:0003735">
    <property type="term" value="F:structural constituent of ribosome"/>
    <property type="evidence" value="ECO:0007669"/>
    <property type="project" value="InterPro"/>
</dbReference>
<dbReference type="GO" id="GO:0006412">
    <property type="term" value="P:translation"/>
    <property type="evidence" value="ECO:0007669"/>
    <property type="project" value="UniProtKB-UniRule"/>
</dbReference>
<dbReference type="Gene3D" id="3.100.10.10">
    <property type="match status" value="1"/>
</dbReference>
<dbReference type="HAMAP" id="MF_01341">
    <property type="entry name" value="Ribosomal_uL15"/>
    <property type="match status" value="1"/>
</dbReference>
<dbReference type="InterPro" id="IPR030878">
    <property type="entry name" value="Ribosomal_uL15"/>
</dbReference>
<dbReference type="InterPro" id="IPR021131">
    <property type="entry name" value="Ribosomal_uL15/eL18"/>
</dbReference>
<dbReference type="InterPro" id="IPR036227">
    <property type="entry name" value="Ribosomal_uL15/eL18_sf"/>
</dbReference>
<dbReference type="InterPro" id="IPR005749">
    <property type="entry name" value="Ribosomal_uL15_bac-type"/>
</dbReference>
<dbReference type="NCBIfam" id="TIGR01071">
    <property type="entry name" value="rplO_bact"/>
    <property type="match status" value="1"/>
</dbReference>
<dbReference type="PANTHER" id="PTHR12934">
    <property type="entry name" value="50S RIBOSOMAL PROTEIN L15"/>
    <property type="match status" value="1"/>
</dbReference>
<dbReference type="PANTHER" id="PTHR12934:SF11">
    <property type="entry name" value="LARGE RIBOSOMAL SUBUNIT PROTEIN UL15M"/>
    <property type="match status" value="1"/>
</dbReference>
<dbReference type="Pfam" id="PF00828">
    <property type="entry name" value="Ribosomal_L27A"/>
    <property type="match status" value="1"/>
</dbReference>
<dbReference type="SUPFAM" id="SSF52080">
    <property type="entry name" value="Ribosomal proteins L15p and L18e"/>
    <property type="match status" value="1"/>
</dbReference>
<name>RL15_BORPD</name>
<comment type="function">
    <text evidence="1">Binds to the 23S rRNA.</text>
</comment>
<comment type="subunit">
    <text evidence="1">Part of the 50S ribosomal subunit.</text>
</comment>
<comment type="similarity">
    <text evidence="1">Belongs to the universal ribosomal protein uL15 family.</text>
</comment>
<reference key="1">
    <citation type="journal article" date="2008" name="BMC Genomics">
        <title>The missing link: Bordetella petrii is endowed with both the metabolic versatility of environmental bacteria and virulence traits of pathogenic Bordetellae.</title>
        <authorList>
            <person name="Gross R."/>
            <person name="Guzman C.A."/>
            <person name="Sebaihia M."/>
            <person name="Martin dos Santos V.A.P."/>
            <person name="Pieper D.H."/>
            <person name="Koebnik R."/>
            <person name="Lechner M."/>
            <person name="Bartels D."/>
            <person name="Buhrmester J."/>
            <person name="Choudhuri J.V."/>
            <person name="Ebensen T."/>
            <person name="Gaigalat L."/>
            <person name="Herrmann S."/>
            <person name="Khachane A.N."/>
            <person name="Larisch C."/>
            <person name="Link S."/>
            <person name="Linke B."/>
            <person name="Meyer F."/>
            <person name="Mormann S."/>
            <person name="Nakunst D."/>
            <person name="Rueckert C."/>
            <person name="Schneiker-Bekel S."/>
            <person name="Schulze K."/>
            <person name="Voerholter F.-J."/>
            <person name="Yevsa T."/>
            <person name="Engle J.T."/>
            <person name="Goldman W.E."/>
            <person name="Puehler A."/>
            <person name="Goebel U.B."/>
            <person name="Goesmann A."/>
            <person name="Bloecker H."/>
            <person name="Kaiser O."/>
            <person name="Martinez-Arias R."/>
        </authorList>
    </citation>
    <scope>NUCLEOTIDE SEQUENCE [LARGE SCALE GENOMIC DNA]</scope>
    <source>
        <strain>ATCC BAA-461 / DSM 12804 / CCUG 43448</strain>
    </source>
</reference>
<sequence length="146" mass="15248">MSDIQLNTLKPAEGAKHAKRRVGRGIGSGLGKTAGRGHKGQKSRSGGFHKVGFEGGQMPLQRRLPKRGFTPLGQHLYAEVRLSDLQALPVDEIDVQTLKAAGVVGQAVRYAKVIKSGELSRKVTLKGLTATAGARAAIEAAGGSLA</sequence>
<organism>
    <name type="scientific">Bordetella petrii (strain ATCC BAA-461 / DSM 12804 / CCUG 43448)</name>
    <dbReference type="NCBI Taxonomy" id="340100"/>
    <lineage>
        <taxon>Bacteria</taxon>
        <taxon>Pseudomonadati</taxon>
        <taxon>Pseudomonadota</taxon>
        <taxon>Betaproteobacteria</taxon>
        <taxon>Burkholderiales</taxon>
        <taxon>Alcaligenaceae</taxon>
        <taxon>Bordetella</taxon>
    </lineage>
</organism>
<gene>
    <name evidence="1" type="primary">rplO</name>
    <name type="ordered locus">Bpet4931</name>
</gene>
<evidence type="ECO:0000255" key="1">
    <source>
        <dbReference type="HAMAP-Rule" id="MF_01341"/>
    </source>
</evidence>
<evidence type="ECO:0000256" key="2">
    <source>
        <dbReference type="SAM" id="MobiDB-lite"/>
    </source>
</evidence>
<evidence type="ECO:0000305" key="3"/>
<feature type="chain" id="PRO_1000142780" description="Large ribosomal subunit protein uL15">
    <location>
        <begin position="1"/>
        <end position="146"/>
    </location>
</feature>
<feature type="region of interest" description="Disordered" evidence="2">
    <location>
        <begin position="1"/>
        <end position="65"/>
    </location>
</feature>
<feature type="compositionally biased region" description="Gly residues" evidence="2">
    <location>
        <begin position="24"/>
        <end position="34"/>
    </location>
</feature>
<proteinExistence type="inferred from homology"/>
<protein>
    <recommendedName>
        <fullName evidence="1">Large ribosomal subunit protein uL15</fullName>
    </recommendedName>
    <alternativeName>
        <fullName evidence="3">50S ribosomal protein L15</fullName>
    </alternativeName>
</protein>
<accession>A9IHS7</accession>